<keyword id="KW-0106">Calcium</keyword>
<keyword id="KW-0903">Direct protein sequencing</keyword>
<keyword id="KW-0325">Glycoprotein</keyword>
<keyword id="KW-0430">Lectin</keyword>
<keyword id="KW-0464">Manganese</keyword>
<keyword id="KW-0479">Metal-binding</keyword>
<keyword id="KW-0732">Signal</keyword>
<accession>Q42372</accession>
<reference key="1">
    <citation type="journal article" date="1994" name="Plant Mol. Biol.">
        <title>Cloning of a lectin cDNA and seasonal changes in levels of the lectin and its mRNA in the inner bark of Robinia pseudoacacia.</title>
        <authorList>
            <person name="Yoshida K."/>
            <person name="Baba K."/>
            <person name="Yamamoto N."/>
            <person name="Tazaki K."/>
        </authorList>
    </citation>
    <scope>NUCLEOTIDE SEQUENCE [MRNA]</scope>
    <source>
        <tissue>Bark</tissue>
    </source>
</reference>
<reference key="2">
    <citation type="journal article" date="1995" name="Plant Physiol.">
        <title>The bark of Robinia pseudoacacia contains a complex mixture of lectins. Characterization of the proteins and the cDNA clones.</title>
        <authorList>
            <person name="van Damme E.J.M."/>
            <person name="Barre A."/>
            <person name="Smeets K."/>
            <person name="Torrekens S."/>
            <person name="van Leuven F."/>
            <person name="Rouge P."/>
            <person name="Peumans W.J."/>
        </authorList>
    </citation>
    <scope>NUCLEOTIDE SEQUENCE [MRNA]</scope>
    <scope>PROTEIN SEQUENCE OF 32-49</scope>
</reference>
<reference key="3">
    <citation type="journal article" date="1992" name="Plant Cell Physiol.">
        <title>The bark lectin of Robinia pseudoacacia: purification and partial characterization.</title>
        <authorList>
            <person name="Tazaki K."/>
            <person name="Yoshida K."/>
        </authorList>
    </citation>
    <scope>PROTEIN SEQUENCE OF 32-51</scope>
    <source>
        <tissue>Bark</tissue>
    </source>
</reference>
<organism>
    <name type="scientific">Robinia pseudoacacia</name>
    <name type="common">Black locust</name>
    <dbReference type="NCBI Taxonomy" id="35938"/>
    <lineage>
        <taxon>Eukaryota</taxon>
        <taxon>Viridiplantae</taxon>
        <taxon>Streptophyta</taxon>
        <taxon>Embryophyta</taxon>
        <taxon>Tracheophyta</taxon>
        <taxon>Spermatophyta</taxon>
        <taxon>Magnoliopsida</taxon>
        <taxon>eudicotyledons</taxon>
        <taxon>Gunneridae</taxon>
        <taxon>Pentapetalae</taxon>
        <taxon>rosids</taxon>
        <taxon>fabids</taxon>
        <taxon>Fabales</taxon>
        <taxon>Fabaceae</taxon>
        <taxon>Papilionoideae</taxon>
        <taxon>50 kb inversion clade</taxon>
        <taxon>NPAAA clade</taxon>
        <taxon>Hologalegina</taxon>
        <taxon>robinioid clade</taxon>
        <taxon>Robinieae</taxon>
        <taxon>Robinia</taxon>
    </lineage>
</organism>
<proteinExistence type="evidence at protein level"/>
<dbReference type="EMBL" id="D17757">
    <property type="protein sequence ID" value="BAA04604.1"/>
    <property type="molecule type" value="mRNA"/>
</dbReference>
<dbReference type="EMBL" id="U12783">
    <property type="protein sequence ID" value="AAA80182.1"/>
    <property type="molecule type" value="mRNA"/>
</dbReference>
<dbReference type="PIR" id="S48033">
    <property type="entry name" value="S48033"/>
</dbReference>
<dbReference type="SMR" id="Q42372"/>
<dbReference type="GO" id="GO:0030246">
    <property type="term" value="F:carbohydrate binding"/>
    <property type="evidence" value="ECO:0007669"/>
    <property type="project" value="UniProtKB-KW"/>
</dbReference>
<dbReference type="GO" id="GO:0046872">
    <property type="term" value="F:metal ion binding"/>
    <property type="evidence" value="ECO:0007669"/>
    <property type="project" value="UniProtKB-KW"/>
</dbReference>
<dbReference type="CDD" id="cd06899">
    <property type="entry name" value="lectin_legume_LecRK_Arcelin_ConA"/>
    <property type="match status" value="1"/>
</dbReference>
<dbReference type="Gene3D" id="2.60.120.200">
    <property type="match status" value="1"/>
</dbReference>
<dbReference type="InterPro" id="IPR013320">
    <property type="entry name" value="ConA-like_dom_sf"/>
</dbReference>
<dbReference type="InterPro" id="IPR016363">
    <property type="entry name" value="L-lectin"/>
</dbReference>
<dbReference type="InterPro" id="IPR000985">
    <property type="entry name" value="Lectin_LegA_CS"/>
</dbReference>
<dbReference type="InterPro" id="IPR019825">
    <property type="entry name" value="Lectin_legB_Mn/Ca_BS"/>
</dbReference>
<dbReference type="InterPro" id="IPR001220">
    <property type="entry name" value="Legume_lectin_dom"/>
</dbReference>
<dbReference type="InterPro" id="IPR050258">
    <property type="entry name" value="Leguminous_Lectin"/>
</dbReference>
<dbReference type="PANTHER" id="PTHR32401">
    <property type="entry name" value="CONCANAVALIN A-LIKE LECTIN FAMILY PROTEIN"/>
    <property type="match status" value="1"/>
</dbReference>
<dbReference type="PANTHER" id="PTHR32401:SF45">
    <property type="entry name" value="LECTIN"/>
    <property type="match status" value="1"/>
</dbReference>
<dbReference type="Pfam" id="PF00139">
    <property type="entry name" value="Lectin_legB"/>
    <property type="match status" value="1"/>
</dbReference>
<dbReference type="PIRSF" id="PIRSF002690">
    <property type="entry name" value="L-type_lectin_plant"/>
    <property type="match status" value="1"/>
</dbReference>
<dbReference type="SUPFAM" id="SSF49899">
    <property type="entry name" value="Concanavalin A-like lectins/glucanases"/>
    <property type="match status" value="1"/>
</dbReference>
<dbReference type="PROSITE" id="PS00308">
    <property type="entry name" value="LECTIN_LEGUME_ALPHA"/>
    <property type="match status" value="1"/>
</dbReference>
<dbReference type="PROSITE" id="PS00307">
    <property type="entry name" value="LECTIN_LEGUME_BETA"/>
    <property type="match status" value="1"/>
</dbReference>
<name>LCB2_ROBPS</name>
<feature type="signal peptide" evidence="3 4">
    <location>
        <begin position="1"/>
        <end position="31"/>
    </location>
</feature>
<feature type="chain" id="PRO_0000017645" description="Bark agglutinin I polypeptide B">
    <location>
        <begin position="32"/>
        <end position="286"/>
    </location>
</feature>
<feature type="binding site" evidence="1">
    <location>
        <position position="157"/>
    </location>
    <ligand>
        <name>Mn(2+)</name>
        <dbReference type="ChEBI" id="CHEBI:29035"/>
    </ligand>
</feature>
<feature type="binding site" evidence="1">
    <location>
        <position position="159"/>
    </location>
    <ligand>
        <name>Ca(2+)</name>
        <dbReference type="ChEBI" id="CHEBI:29108"/>
    </ligand>
</feature>
<feature type="binding site" evidence="1">
    <location>
        <position position="159"/>
    </location>
    <ligand>
        <name>Mn(2+)</name>
        <dbReference type="ChEBI" id="CHEBI:29035"/>
    </ligand>
</feature>
<feature type="binding site" evidence="1">
    <location>
        <position position="163"/>
    </location>
    <ligand>
        <name>Ca(2+)</name>
        <dbReference type="ChEBI" id="CHEBI:29108"/>
    </ligand>
</feature>
<feature type="binding site" evidence="1">
    <location>
        <position position="167"/>
    </location>
    <ligand>
        <name>Ca(2+)</name>
        <dbReference type="ChEBI" id="CHEBI:29108"/>
    </ligand>
</feature>
<feature type="binding site" evidence="1">
    <location>
        <position position="167"/>
    </location>
    <ligand>
        <name>Mn(2+)</name>
        <dbReference type="ChEBI" id="CHEBI:29035"/>
    </ligand>
</feature>
<feature type="binding site" evidence="1">
    <location>
        <position position="172"/>
    </location>
    <ligand>
        <name>Mn(2+)</name>
        <dbReference type="ChEBI" id="CHEBI:29035"/>
    </ligand>
</feature>
<feature type="glycosylation site" description="N-linked (GlcNAc...) asparagine" evidence="2">
    <location>
        <position position="148"/>
    </location>
</feature>
<feature type="sequence conflict" description="In Ref. 2; AA sequence." evidence="5" ref="2">
    <original>KHSQ</original>
    <variation>MPNE</variation>
    <location>
        <begin position="43"/>
        <end position="46"/>
    </location>
</feature>
<feature type="sequence conflict" description="In Ref. 3; AA sequence." evidence="5" ref="3">
    <original>D</original>
    <variation>W</variation>
    <location>
        <position position="48"/>
    </location>
</feature>
<evidence type="ECO:0000250" key="1"/>
<evidence type="ECO:0000255" key="2"/>
<evidence type="ECO:0000269" key="3">
    <source>
    </source>
</evidence>
<evidence type="ECO:0000269" key="4">
    <source ref="3"/>
</evidence>
<evidence type="ECO:0000305" key="5"/>
<sequence length="286" mass="31211">MASYKFKTQNSFLLLLSISFFFLLLLNKVNSTGSLSFSFPKFKHSQPDLIFQSDALVTSKGVLQLTTVNDGRPVYDSIGRVLYAAPFQIWDSTTGNVASFVTSFSFIIKAPNEGKTADGLVFFLAPVGSTQPLKGGGLLGLFKDESYNKSNQIVAVEFDTFRNVAWDPNGIHMGIDVNSIQSVRTVRWDWANGEVANVFISYEASTKSLTASLVYPSLEKSFILSAIVDLKKVLPEWVRVGFTATTGLSEDYVQTNDVLSWSFESNLPGGNSVASVKNAGLSTYAA</sequence>
<protein>
    <recommendedName>
        <fullName>Bark agglutinin I polypeptide B</fullName>
    </recommendedName>
    <alternativeName>
        <fullName>LECRPA2</fullName>
    </alternativeName>
    <alternativeName>
        <fullName>RPbAI</fullName>
    </alternativeName>
</protein>
<comment type="function">
    <text>Bark lectins are storage proteins that probably maintain stocks of nitrogen during dormant period. Self-aggregatable molecules that can bind their own carbohydrate side chains. They could also play a role in the plant's defense against phytophagous invertebrates or herbivorous higher animals.</text>
</comment>
<comment type="subunit">
    <text>RPbAI is composed of two polypeptides, A and B, that associate into five different tetrameric isolectins. The A4 combination is the only one devoid of agglutination activity. Isoform B4 displays maximal agglutination activity.</text>
</comment>
<comment type="tissue specificity">
    <text>Mostly in the axial and ray parenchymal cells of the inner bark. Fewer in the axial and ray parenchymal cells of the xylem. Strong expression in bark. The lectin accumulates in the inner bark in autumn and winter and disappears in may.</text>
</comment>
<comment type="similarity">
    <text evidence="5">Belongs to the leguminous lectin family.</text>
</comment>